<organism>
    <name type="scientific">Rattus norvegicus</name>
    <name type="common">Rat</name>
    <dbReference type="NCBI Taxonomy" id="10116"/>
    <lineage>
        <taxon>Eukaryota</taxon>
        <taxon>Metazoa</taxon>
        <taxon>Chordata</taxon>
        <taxon>Craniata</taxon>
        <taxon>Vertebrata</taxon>
        <taxon>Euteleostomi</taxon>
        <taxon>Mammalia</taxon>
        <taxon>Eutheria</taxon>
        <taxon>Euarchontoglires</taxon>
        <taxon>Glires</taxon>
        <taxon>Rodentia</taxon>
        <taxon>Myomorpha</taxon>
        <taxon>Muroidea</taxon>
        <taxon>Muridae</taxon>
        <taxon>Murinae</taxon>
        <taxon>Rattus</taxon>
    </lineage>
</organism>
<feature type="chain" id="PRO_0000289948" description="Heat shock 70 kDa protein 14">
    <location>
        <begin position="1"/>
        <end position="509"/>
    </location>
</feature>
<comment type="function">
    <text evidence="1">Component of the ribosome-associated complex (RAC), a complex involved in folding or maintaining nascent polypeptides in a folding-competent state. In the RAC complex, binds to the nascent polypeptide chain, while DNAJC2 stimulates its ATPase activity (By similarity).</text>
</comment>
<comment type="subunit">
    <text evidence="1">Component of ribosome-associated complex (RAC), a heterodimer composed of Hsp70/DnaK-type chaperone HSPA14 and Hsp40/DnaJ-type chaperone DNAJC2.</text>
</comment>
<comment type="subcellular location">
    <subcellularLocation>
        <location evidence="1">Cytoplasm</location>
        <location evidence="1">Cytosol</location>
    </subcellularLocation>
</comment>
<comment type="similarity">
    <text evidence="2">Belongs to the heat shock protein 70 family.</text>
</comment>
<protein>
    <recommendedName>
        <fullName>Heat shock 70 kDa protein 14</fullName>
    </recommendedName>
</protein>
<gene>
    <name type="primary">Hspa14</name>
</gene>
<name>HSP7E_RAT</name>
<evidence type="ECO:0000250" key="1"/>
<evidence type="ECO:0000305" key="2"/>
<keyword id="KW-0067">ATP-binding</keyword>
<keyword id="KW-0143">Chaperone</keyword>
<keyword id="KW-0963">Cytoplasm</keyword>
<keyword id="KW-0547">Nucleotide-binding</keyword>
<keyword id="KW-1185">Reference proteome</keyword>
<proteinExistence type="evidence at transcript level"/>
<reference key="1">
    <citation type="journal article" date="2004" name="Genome Res.">
        <title>The status, quality, and expansion of the NIH full-length cDNA project: the Mammalian Gene Collection (MGC).</title>
        <authorList>
            <consortium name="The MGC Project Team"/>
        </authorList>
    </citation>
    <scope>NUCLEOTIDE SEQUENCE [LARGE SCALE MRNA]</scope>
    <source>
        <tissue>Kidney</tissue>
    </source>
</reference>
<accession>Q6AYB4</accession>
<sequence>MAAIGVHLGCTSACVAVYKDGRADVVANDAGDRVTPAVVAYSEREQVVGLAAKQSRIRNISSTVVKVKQILGRSTADPQAQKYISESKCLVIEKNGKLQYEIDTGEETKLVSPEDVARLIFSKMKETAHSVLGSDANDVVVTVPFDFGEKQKSALGEAAGAAGFNVLRLIHEPSAALLAYGIGQDCPTGKSNVLVFKLGGTSLSLSIMEVNSGMYRVLSTNTSDNIGGVHFTDSLAQYLASEFQRLFKHDVRGSARAMMKLMNSAEVAKHSLSTLGSANCFVDSLYEGQDFDCNVSRARFELLCSPLFNKCIEAVRALLQQSGFTADDINKVVLCGGSSRIPRLQQLIKDLFPAGDLLNSIPPDEVIPIGAAIEAGILVGKESTSGDDSVLIECSARDILVKGVDESGANRFTVLFPSGTPLPARRQHTLQAPGSISSVCLELYESEGKNSVKEETKFAQVVLQDLDKKENGLRDILAVLTMKRDGSLQVTCTDQETGKCEAITVEVAS</sequence>
<dbReference type="EMBL" id="BC079118">
    <property type="protein sequence ID" value="AAH79118.1"/>
    <property type="molecule type" value="mRNA"/>
</dbReference>
<dbReference type="RefSeq" id="NP_001004257.1">
    <property type="nucleotide sequence ID" value="NM_001004257.1"/>
</dbReference>
<dbReference type="SMR" id="Q6AYB4"/>
<dbReference type="CORUM" id="Q6AYB4"/>
<dbReference type="FunCoup" id="Q6AYB4">
    <property type="interactions" value="3287"/>
</dbReference>
<dbReference type="STRING" id="10116.ENSRNOP00000020854"/>
<dbReference type="PhosphoSitePlus" id="Q6AYB4"/>
<dbReference type="jPOST" id="Q6AYB4"/>
<dbReference type="PaxDb" id="10116-ENSRNOP00000020854"/>
<dbReference type="Ensembl" id="ENSRNOT00000020854.6">
    <property type="protein sequence ID" value="ENSRNOP00000020854.3"/>
    <property type="gene ID" value="ENSRNOG00000015212.7"/>
</dbReference>
<dbReference type="GeneID" id="307133"/>
<dbReference type="KEGG" id="rno:307133"/>
<dbReference type="UCSC" id="RGD:1303296">
    <property type="organism name" value="rat"/>
</dbReference>
<dbReference type="AGR" id="RGD:1303296"/>
<dbReference type="CTD" id="51182"/>
<dbReference type="RGD" id="1303296">
    <property type="gene designation" value="Hspa14"/>
</dbReference>
<dbReference type="eggNOG" id="KOG0101">
    <property type="taxonomic scope" value="Eukaryota"/>
</dbReference>
<dbReference type="GeneTree" id="ENSGT00940000156380"/>
<dbReference type="HOGENOM" id="CLU_005965_0_3_1"/>
<dbReference type="InParanoid" id="Q6AYB4"/>
<dbReference type="OMA" id="GSTCACA"/>
<dbReference type="OrthoDB" id="29851at2759"/>
<dbReference type="PhylomeDB" id="Q6AYB4"/>
<dbReference type="TreeFam" id="TF105045"/>
<dbReference type="Reactome" id="R-RNO-3371453">
    <property type="pathway name" value="Regulation of HSF1-mediated heat shock response"/>
</dbReference>
<dbReference type="PRO" id="PR:Q6AYB4"/>
<dbReference type="Proteomes" id="UP000002494">
    <property type="component" value="Chromosome 17"/>
</dbReference>
<dbReference type="Bgee" id="ENSRNOG00000015212">
    <property type="expression patterns" value="Expressed in thymus and 19 other cell types or tissues"/>
</dbReference>
<dbReference type="GO" id="GO:0005737">
    <property type="term" value="C:cytoplasm"/>
    <property type="evidence" value="ECO:0000318"/>
    <property type="project" value="GO_Central"/>
</dbReference>
<dbReference type="GO" id="GO:0005829">
    <property type="term" value="C:cytosol"/>
    <property type="evidence" value="ECO:0000250"/>
    <property type="project" value="UniProtKB"/>
</dbReference>
<dbReference type="GO" id="GO:0005634">
    <property type="term" value="C:nucleus"/>
    <property type="evidence" value="ECO:0000318"/>
    <property type="project" value="GO_Central"/>
</dbReference>
<dbReference type="GO" id="GO:0005886">
    <property type="term" value="C:plasma membrane"/>
    <property type="evidence" value="ECO:0000318"/>
    <property type="project" value="GO_Central"/>
</dbReference>
<dbReference type="GO" id="GO:0005840">
    <property type="term" value="C:ribosome"/>
    <property type="evidence" value="ECO:0000266"/>
    <property type="project" value="RGD"/>
</dbReference>
<dbReference type="GO" id="GO:0005524">
    <property type="term" value="F:ATP binding"/>
    <property type="evidence" value="ECO:0007669"/>
    <property type="project" value="UniProtKB-KW"/>
</dbReference>
<dbReference type="GO" id="GO:0016887">
    <property type="term" value="F:ATP hydrolysis activity"/>
    <property type="evidence" value="ECO:0000318"/>
    <property type="project" value="GO_Central"/>
</dbReference>
<dbReference type="GO" id="GO:0140662">
    <property type="term" value="F:ATP-dependent protein folding chaperone"/>
    <property type="evidence" value="ECO:0007669"/>
    <property type="project" value="InterPro"/>
</dbReference>
<dbReference type="GO" id="GO:0031072">
    <property type="term" value="F:heat shock protein binding"/>
    <property type="evidence" value="ECO:0000318"/>
    <property type="project" value="GO_Central"/>
</dbReference>
<dbReference type="GO" id="GO:0044183">
    <property type="term" value="F:protein folding chaperone"/>
    <property type="evidence" value="ECO:0000318"/>
    <property type="project" value="GO_Central"/>
</dbReference>
<dbReference type="GO" id="GO:0051085">
    <property type="term" value="P:chaperone cofactor-dependent protein refolding"/>
    <property type="evidence" value="ECO:0000318"/>
    <property type="project" value="GO_Central"/>
</dbReference>
<dbReference type="GO" id="GO:0042026">
    <property type="term" value="P:protein refolding"/>
    <property type="evidence" value="ECO:0000318"/>
    <property type="project" value="GO_Central"/>
</dbReference>
<dbReference type="CDD" id="cd10238">
    <property type="entry name" value="ASKHA_NBD_HSP70_HSPA14"/>
    <property type="match status" value="1"/>
</dbReference>
<dbReference type="FunFam" id="2.60.34.10:FF:000013">
    <property type="entry name" value="Heat shock 70 kDa protein 14"/>
    <property type="match status" value="1"/>
</dbReference>
<dbReference type="FunFam" id="3.30.30.30:FF:000008">
    <property type="entry name" value="heat shock 70 kDa protein 14"/>
    <property type="match status" value="1"/>
</dbReference>
<dbReference type="FunFam" id="3.90.640.10:FF:000010">
    <property type="entry name" value="heat shock 70 kDa protein 14"/>
    <property type="match status" value="1"/>
</dbReference>
<dbReference type="FunFam" id="3.30.420.40:FF:000171">
    <property type="entry name" value="Heat shock 70 kDa protein 4"/>
    <property type="match status" value="1"/>
</dbReference>
<dbReference type="FunFam" id="3.30.420.40:FF:000433">
    <property type="entry name" value="Heat shock protein family A (Hsp70) member 14"/>
    <property type="match status" value="1"/>
</dbReference>
<dbReference type="Gene3D" id="3.30.30.30">
    <property type="match status" value="1"/>
</dbReference>
<dbReference type="Gene3D" id="3.30.420.40">
    <property type="match status" value="2"/>
</dbReference>
<dbReference type="Gene3D" id="3.90.640.10">
    <property type="entry name" value="Actin, Chain A, domain 4"/>
    <property type="match status" value="1"/>
</dbReference>
<dbReference type="Gene3D" id="2.60.34.10">
    <property type="entry name" value="Substrate Binding Domain Of DNAk, Chain A, domain 1"/>
    <property type="match status" value="1"/>
</dbReference>
<dbReference type="InterPro" id="IPR043129">
    <property type="entry name" value="ATPase_NBD"/>
</dbReference>
<dbReference type="InterPro" id="IPR018181">
    <property type="entry name" value="Heat_shock_70_CS"/>
</dbReference>
<dbReference type="InterPro" id="IPR029047">
    <property type="entry name" value="HSP70_peptide-bd_sf"/>
</dbReference>
<dbReference type="InterPro" id="IPR013126">
    <property type="entry name" value="Hsp_70_fam"/>
</dbReference>
<dbReference type="InterPro" id="IPR042049">
    <property type="entry name" value="HSPA14_NBD"/>
</dbReference>
<dbReference type="PANTHER" id="PTHR19375">
    <property type="entry name" value="HEAT SHOCK PROTEIN 70KDA"/>
    <property type="match status" value="1"/>
</dbReference>
<dbReference type="Pfam" id="PF00012">
    <property type="entry name" value="HSP70"/>
    <property type="match status" value="1"/>
</dbReference>
<dbReference type="PRINTS" id="PR00301">
    <property type="entry name" value="HEATSHOCK70"/>
</dbReference>
<dbReference type="SUPFAM" id="SSF53067">
    <property type="entry name" value="Actin-like ATPase domain"/>
    <property type="match status" value="2"/>
</dbReference>
<dbReference type="SUPFAM" id="SSF100920">
    <property type="entry name" value="Heat shock protein 70kD (HSP70), peptide-binding domain"/>
    <property type="match status" value="1"/>
</dbReference>
<dbReference type="PROSITE" id="PS01036">
    <property type="entry name" value="HSP70_3"/>
    <property type="match status" value="1"/>
</dbReference>